<comment type="function">
    <text>Inhibins and activins inhibit and activate, respectively, the secretion of follitropin by the pituitary gland. Inhibins/activins are involved in regulating a number of diverse functions such as hypothalamic and pituitary hormone secretion, gonadal hormone secretion, germ cell development and maturation, erythroid differentiation, insulin secretion, nerve cell survival, embryonic axial development or bone growth, depending on their subunit composition. Inhibins appear to oppose the functions of activins.</text>
</comment>
<comment type="function">
    <text evidence="2">Inhibin A is a dimer of alpha/INHA and beta-A/INHBA that functions as a feedback regulator in the hypothalamic-pituitary-gonadal (HPG) axis. Inhibits the secretion of FSH from the anterior pituitary gland by acting on pituitary gonadotrope cells. Antagonizes activin A by binding to the proteoglycan, betaglycan, and forming a stable complex with and, thereby, sequestering type II activin receptors while excluding type I receptor.</text>
</comment>
<comment type="function">
    <text evidence="3 6 8">Inhibin B is a dimer of alpha and beta-B that plays a crucial role in the regulation of the reproductive system by inhibiting the secretion of follicle-stimulating hormone (FSH) from the anterior pituitary gland. Thereby, maintains reproductive homeostasis in both males and females. Acts as a more potent suppressor of FSH release than inhibin A (By similarity). Functions as competitive receptor antagonist binding activin type II receptors with high affinity in the presence of the TGF-beta type III coreceptor/TGFBR3L (PubMed:34910520).</text>
</comment>
<comment type="subunit">
    <text evidence="6 8">Dimeric, linked by one or more disulfide bonds. Activin B is a dimer of alpha and beta-B. Inhibin A is a dimer of alpha and beta-A (PubMed:11786387). Inhibin B is a dimer of alpha and beta-B (PubMed:11786387). Interacts with TGFBR3L; this interaction regulates female fertility.</text>
</comment>
<comment type="interaction">
    <interactant intactId="EBI-10194422">
        <id>P05111</id>
    </interactant>
    <interactant intactId="EBI-747107">
        <id>Q8IUQ4</id>
        <label>SIAH1</label>
    </interactant>
    <organismsDiffer>false</organismsDiffer>
    <experiments>3</experiments>
</comment>
<comment type="interaction">
    <interactant intactId="EBI-10194422">
        <id>P05111</id>
    </interactant>
    <interactant intactId="EBI-11522811">
        <id>Q8IUQ4-2</id>
        <label>SIAH1</label>
    </interactant>
    <organismsDiffer>false</organismsDiffer>
    <experiments>3</experiments>
</comment>
<comment type="subcellular location">
    <subcellularLocation>
        <location evidence="3">Secreted</location>
    </subcellularLocation>
</comment>
<comment type="tissue specificity">
    <text evidence="10">Originally found in ovary (granulosa cells) and testis (Sertoli cells), but widely distributed in many tissues including brain and placenta. In adrenal cortex expression is limited to the zona reticularis and the innermost zona fasciculata in the normal gland, extending centripetally into the zona fasciculata in hyperplasia. Also found in adrenocortical tumors. Also expressed in prostate epithelium of benign prostatic hyperplasia, in regions of basal cell hyperplasia and in nonmalignant regions of high grade prostate cancer. Only circulating inhibin B is found in male, whereas circulating inhibins A and B are found in female.</text>
</comment>
<comment type="PTM">
    <text evidence="9">Proteolytic processing yields a number of bioactive forms. The 20/23 kDa forms consist solely of the mature alpha chain, the 26/29 kDa forms consist of the most N-terminal propeptide linked through a disulfide bond to the mature alpha chain, the 50/53 kDa forms encompass the entire proprotein. Each type can be furthermore either mono- or diglycosylated, causing the mass difference.</text>
</comment>
<comment type="similarity">
    <text evidence="11">Belongs to the TGF-beta family.</text>
</comment>
<comment type="online information" name="Wikipedia">
    <link uri="https://en.wikipedia.org/wiki/Inhibin"/>
    <text>Inhibin entry</text>
</comment>
<protein>
    <recommendedName>
        <fullName>Inhibin alpha chain</fullName>
    </recommendedName>
</protein>
<gene>
    <name type="primary">INHA</name>
</gene>
<reference key="1">
    <citation type="journal article" date="1986" name="Proc. Natl. Acad. Sci. U.S.A.">
        <title>Inhibin A-subunit cDNAs from porcine ovary and human placenta.</title>
        <authorList>
            <person name="Mayo K.E."/>
            <person name="Cerelli G.M."/>
            <person name="Spiess J."/>
            <person name="Rivier J."/>
            <person name="Rosenfeld M.G."/>
            <person name="Evans R.M."/>
            <person name="Vale W."/>
        </authorList>
    </citation>
    <scope>NUCLEOTIDE SEQUENCE [MRNA]</scope>
</reference>
<reference key="2">
    <citation type="journal article" date="1986" name="FEBS Lett.">
        <title>Human inhibin genes. Genomic characterisation and sequencing.</title>
        <authorList>
            <person name="Stewart A.G."/>
            <person name="Milborrow H.M."/>
            <person name="Ring J.M."/>
            <person name="Crowther C.E."/>
            <person name="Forage R.G."/>
        </authorList>
    </citation>
    <scope>NUCLEOTIDE SEQUENCE [GENOMIC DNA]</scope>
</reference>
<reference key="3">
    <citation type="submission" date="2004-10" db="EMBL/GenBank/DDBJ databases">
        <title>Cloning of human full-length CDSs in BD Creator(TM) system donor vector.</title>
        <authorList>
            <person name="Kalnine N."/>
            <person name="Chen X."/>
            <person name="Rolfs A."/>
            <person name="Halleck A."/>
            <person name="Hines L."/>
            <person name="Eisenstein S."/>
            <person name="Koundinya M."/>
            <person name="Raphael J."/>
            <person name="Moreira D."/>
            <person name="Kelley T."/>
            <person name="LaBaer J."/>
            <person name="Lin Y."/>
            <person name="Phelan M."/>
            <person name="Farmer A."/>
        </authorList>
    </citation>
    <scope>NUCLEOTIDE SEQUENCE [LARGE SCALE MRNA]</scope>
</reference>
<reference key="4">
    <citation type="journal article" date="2004" name="Nat. Genet.">
        <title>Complete sequencing and characterization of 21,243 full-length human cDNAs.</title>
        <authorList>
            <person name="Ota T."/>
            <person name="Suzuki Y."/>
            <person name="Nishikawa T."/>
            <person name="Otsuki T."/>
            <person name="Sugiyama T."/>
            <person name="Irie R."/>
            <person name="Wakamatsu A."/>
            <person name="Hayashi K."/>
            <person name="Sato H."/>
            <person name="Nagai K."/>
            <person name="Kimura K."/>
            <person name="Makita H."/>
            <person name="Sekine M."/>
            <person name="Obayashi M."/>
            <person name="Nishi T."/>
            <person name="Shibahara T."/>
            <person name="Tanaka T."/>
            <person name="Ishii S."/>
            <person name="Yamamoto J."/>
            <person name="Saito K."/>
            <person name="Kawai Y."/>
            <person name="Isono Y."/>
            <person name="Nakamura Y."/>
            <person name="Nagahari K."/>
            <person name="Murakami K."/>
            <person name="Yasuda T."/>
            <person name="Iwayanagi T."/>
            <person name="Wagatsuma M."/>
            <person name="Shiratori A."/>
            <person name="Sudo H."/>
            <person name="Hosoiri T."/>
            <person name="Kaku Y."/>
            <person name="Kodaira H."/>
            <person name="Kondo H."/>
            <person name="Sugawara M."/>
            <person name="Takahashi M."/>
            <person name="Kanda K."/>
            <person name="Yokoi T."/>
            <person name="Furuya T."/>
            <person name="Kikkawa E."/>
            <person name="Omura Y."/>
            <person name="Abe K."/>
            <person name="Kamihara K."/>
            <person name="Katsuta N."/>
            <person name="Sato K."/>
            <person name="Tanikawa M."/>
            <person name="Yamazaki M."/>
            <person name="Ninomiya K."/>
            <person name="Ishibashi T."/>
            <person name="Yamashita H."/>
            <person name="Murakawa K."/>
            <person name="Fujimori K."/>
            <person name="Tanai H."/>
            <person name="Kimata M."/>
            <person name="Watanabe M."/>
            <person name="Hiraoka S."/>
            <person name="Chiba Y."/>
            <person name="Ishida S."/>
            <person name="Ono Y."/>
            <person name="Takiguchi S."/>
            <person name="Watanabe S."/>
            <person name="Yosida M."/>
            <person name="Hotuta T."/>
            <person name="Kusano J."/>
            <person name="Kanehori K."/>
            <person name="Takahashi-Fujii A."/>
            <person name="Hara H."/>
            <person name="Tanase T.-O."/>
            <person name="Nomura Y."/>
            <person name="Togiya S."/>
            <person name="Komai F."/>
            <person name="Hara R."/>
            <person name="Takeuchi K."/>
            <person name="Arita M."/>
            <person name="Imose N."/>
            <person name="Musashino K."/>
            <person name="Yuuki H."/>
            <person name="Oshima A."/>
            <person name="Sasaki N."/>
            <person name="Aotsuka S."/>
            <person name="Yoshikawa Y."/>
            <person name="Matsunawa H."/>
            <person name="Ichihara T."/>
            <person name="Shiohata N."/>
            <person name="Sano S."/>
            <person name="Moriya S."/>
            <person name="Momiyama H."/>
            <person name="Satoh N."/>
            <person name="Takami S."/>
            <person name="Terashima Y."/>
            <person name="Suzuki O."/>
            <person name="Nakagawa S."/>
            <person name="Senoh A."/>
            <person name="Mizoguchi H."/>
            <person name="Goto Y."/>
            <person name="Shimizu F."/>
            <person name="Wakebe H."/>
            <person name="Hishigaki H."/>
            <person name="Watanabe T."/>
            <person name="Sugiyama A."/>
            <person name="Takemoto M."/>
            <person name="Kawakami B."/>
            <person name="Yamazaki M."/>
            <person name="Watanabe K."/>
            <person name="Kumagai A."/>
            <person name="Itakura S."/>
            <person name="Fukuzumi Y."/>
            <person name="Fujimori Y."/>
            <person name="Komiyama M."/>
            <person name="Tashiro H."/>
            <person name="Tanigami A."/>
            <person name="Fujiwara T."/>
            <person name="Ono T."/>
            <person name="Yamada K."/>
            <person name="Fujii Y."/>
            <person name="Ozaki K."/>
            <person name="Hirao M."/>
            <person name="Ohmori Y."/>
            <person name="Kawabata A."/>
            <person name="Hikiji T."/>
            <person name="Kobatake N."/>
            <person name="Inagaki H."/>
            <person name="Ikema Y."/>
            <person name="Okamoto S."/>
            <person name="Okitani R."/>
            <person name="Kawakami T."/>
            <person name="Noguchi S."/>
            <person name="Itoh T."/>
            <person name="Shigeta K."/>
            <person name="Senba T."/>
            <person name="Matsumura K."/>
            <person name="Nakajima Y."/>
            <person name="Mizuno T."/>
            <person name="Morinaga M."/>
            <person name="Sasaki M."/>
            <person name="Togashi T."/>
            <person name="Oyama M."/>
            <person name="Hata H."/>
            <person name="Watanabe M."/>
            <person name="Komatsu T."/>
            <person name="Mizushima-Sugano J."/>
            <person name="Satoh T."/>
            <person name="Shirai Y."/>
            <person name="Takahashi Y."/>
            <person name="Nakagawa K."/>
            <person name="Okumura K."/>
            <person name="Nagase T."/>
            <person name="Nomura N."/>
            <person name="Kikuchi H."/>
            <person name="Masuho Y."/>
            <person name="Yamashita R."/>
            <person name="Nakai K."/>
            <person name="Yada T."/>
            <person name="Nakamura Y."/>
            <person name="Ohara O."/>
            <person name="Isogai T."/>
            <person name="Sugano S."/>
        </authorList>
    </citation>
    <scope>NUCLEOTIDE SEQUENCE [LARGE SCALE MRNA]</scope>
    <source>
        <tissue>Testis</tissue>
    </source>
</reference>
<reference key="5">
    <citation type="submission" date="2005-07" db="EMBL/GenBank/DDBJ databases">
        <authorList>
            <person name="Mural R.J."/>
            <person name="Istrail S."/>
            <person name="Sutton G.G."/>
            <person name="Florea L."/>
            <person name="Halpern A.L."/>
            <person name="Mobarry C.M."/>
            <person name="Lippert R."/>
            <person name="Walenz B."/>
            <person name="Shatkay H."/>
            <person name="Dew I."/>
            <person name="Miller J.R."/>
            <person name="Flanigan M.J."/>
            <person name="Edwards N.J."/>
            <person name="Bolanos R."/>
            <person name="Fasulo D."/>
            <person name="Halldorsson B.V."/>
            <person name="Hannenhalli S."/>
            <person name="Turner R."/>
            <person name="Yooseph S."/>
            <person name="Lu F."/>
            <person name="Nusskern D.R."/>
            <person name="Shue B.C."/>
            <person name="Zheng X.H."/>
            <person name="Zhong F."/>
            <person name="Delcher A.L."/>
            <person name="Huson D.H."/>
            <person name="Kravitz S.A."/>
            <person name="Mouchard L."/>
            <person name="Reinert K."/>
            <person name="Remington K.A."/>
            <person name="Clark A.G."/>
            <person name="Waterman M.S."/>
            <person name="Eichler E.E."/>
            <person name="Adams M.D."/>
            <person name="Hunkapiller M.W."/>
            <person name="Myers E.W."/>
            <person name="Venter J.C."/>
        </authorList>
    </citation>
    <scope>NUCLEOTIDE SEQUENCE [LARGE SCALE GENOMIC DNA]</scope>
</reference>
<reference key="6">
    <citation type="journal article" date="2004" name="Genome Res.">
        <title>The status, quality, and expansion of the NIH full-length cDNA project: the Mammalian Gene Collection (MGC).</title>
        <authorList>
            <consortium name="The MGC Project Team"/>
        </authorList>
    </citation>
    <scope>NUCLEOTIDE SEQUENCE [LARGE SCALE MRNA]</scope>
    <source>
        <tissue>Brain</tissue>
    </source>
</reference>
<reference key="7">
    <citation type="journal article" date="1986" name="Biochem. Biophys. Res. Commun.">
        <title>Structure of two human ovarian inhibins.</title>
        <authorList>
            <person name="Mason A.J."/>
            <person name="Niall H.D."/>
            <person name="Seeburg P.H."/>
        </authorList>
    </citation>
    <scope>NUCLEOTIDE SEQUENCE [MRNA] OF 16-366</scope>
</reference>
<reference key="8">
    <citation type="journal article" date="1996" name="Mol. Endocrinol.">
        <title>Characterization and determination of the biological activities of noncleavable high molecular weight forms of inhibin A and activin A.</title>
        <authorList>
            <person name="Mason A.J."/>
            <person name="Farnworth P.G."/>
            <person name="Sullivan J."/>
        </authorList>
    </citation>
    <scope>PARTIAL PROTEIN SEQUENCE</scope>
    <scope>PROTEOLYTIC PROCESSING</scope>
    <scope>GLYCOSYLATION AT ASN-268 AND ASN-302</scope>
    <scope>MUTAGENESIS</scope>
</reference>
<reference key="9">
    <citation type="journal article" date="2002" name="J. Endocrinol.">
        <title>Production and purification of recombinant human inhibin and activin.</title>
        <authorList>
            <person name="Pangas S.A."/>
            <person name="Woodruff T.K."/>
        </authorList>
    </citation>
    <scope>FUNCTION</scope>
    <scope>SUBUNIT</scope>
</reference>
<reference key="10">
    <citation type="journal article" date="2021" name="Sci. Adv.">
        <title>TGFBR3L is an inhibin B co-receptor that regulates female fertility.</title>
        <authorList>
            <person name="Brule E."/>
            <person name="Wang Y."/>
            <person name="Li Y."/>
            <person name="Lin Y.F."/>
            <person name="Zhou X."/>
            <person name="Ongaro L."/>
            <person name="Alonso C.A.I."/>
            <person name="Buddle E.R.S."/>
            <person name="Schneyer A.L."/>
            <person name="Byeon C.H."/>
            <person name="Hinck C.S."/>
            <person name="Mendelev N."/>
            <person name="Russell J.P."/>
            <person name="Cowan M."/>
            <person name="Boehm U."/>
            <person name="Ruf-Zamojski F."/>
            <person name="Zamojski M."/>
            <person name="Andoniadou C.L."/>
            <person name="Sealfon S.C."/>
            <person name="Harrison C.A."/>
            <person name="Walton K.L."/>
            <person name="Hinck A.P."/>
            <person name="Bernard D.J."/>
        </authorList>
    </citation>
    <scope>FUNCTION</scope>
    <scope>INTERACTION WITH TGFBR3L</scope>
</reference>
<reference key="11">
    <citation type="journal article" date="1998" name="J. Clin. Endocrinol. Metab.">
        <title>Loss of the expression and localization of inhibin alpha-subunit in high grade prostate cancer.</title>
        <authorList>
            <person name="Mellor S.L."/>
            <person name="Richards M.G."/>
            <person name="Pedersen J.S."/>
            <person name="Robertson D.M."/>
            <person name="Risbridger G.P."/>
        </authorList>
    </citation>
    <scope>TISSUE SPECIFICITY</scope>
    <scope>INDUCTION</scope>
</reference>
<reference key="12">
    <citation type="journal article" date="2000" name="Hum. Reprod.">
        <title>Inhibin: a candidate gene for premature ovarian failure.</title>
        <authorList>
            <person name="Shelling A.N."/>
            <person name="Burton K.A."/>
            <person name="Chand A.L."/>
            <person name="van Ee C.C."/>
            <person name="France J.T."/>
            <person name="Farquhar C.M."/>
            <person name="Milsom S.R."/>
            <person name="Love D.R."/>
            <person name="Gersak K."/>
            <person name="Aittomaki K."/>
            <person name="Winship I.M."/>
        </authorList>
    </citation>
    <scope>VARIANT THR-257</scope>
</reference>
<reference key="13">
    <citation type="journal article" date="2014" name="Hum. Mutat.">
        <title>Germline mutations of inhibins in early-onset ovarian epithelial tumors.</title>
        <authorList>
            <person name="Tournier I."/>
            <person name="Marlin R."/>
            <person name="Walton K."/>
            <person name="Charbonnier F."/>
            <person name="Coutant S."/>
            <person name="Thery J.C."/>
            <person name="Charbonnier C."/>
            <person name="Spurrell C."/>
            <person name="Vezain M."/>
            <person name="Ippolito L."/>
            <person name="Bougeard G."/>
            <person name="Roman H."/>
            <person name="Tinat J."/>
            <person name="Sabourin J.C."/>
            <person name="Stoppa-Lyonnet D."/>
            <person name="Caron O."/>
            <person name="Bressac-de Paillerets B."/>
            <person name="Vaur D."/>
            <person name="King M.C."/>
            <person name="Harrison C."/>
            <person name="Frebourg T."/>
        </authorList>
    </citation>
    <scope>VARIANT LEU-60</scope>
    <scope>CHARACTERIZATION OF VARIANT LEU-60</scope>
</reference>
<accession>P05111</accession>
<accession>A8K8H5</accession>
<name>INHA_HUMAN</name>
<proteinExistence type="evidence at protein level"/>
<sequence>MVLHLLLFLLLTPQGGHSCQGLELARELVLAKVRALFLDALGPPAVTREGGDPGVRRLPRRHALGGFTHRGSEPEEEEDVSQAILFPATDASCEDKSAARGLAQEAEEGLFRYMFRPSQHTRSRQVTSAQLWFHTGLDRQGTAASNSSEPLLGLLALSPGGPVAVPMSLGHAPPHWAVLHLATSALSLLTHPVLVLLLRCPLCTCSARPEATPFLVAHTRTRPPSGGERARRSTPLMSWPWSPSALRLLQRPPEEPAAHANCHRVALNISFQELGWERWIVYPPSFIFHYCHGGCGLHIPPNLSLPVPGAPPTPAQPYSLLPGAQPCCAALPGTMRPLHVRTTSDGGYSFKYETVPNLLTQHCACI</sequence>
<feature type="signal peptide">
    <location>
        <begin position="1"/>
        <end position="18"/>
    </location>
</feature>
<feature type="propeptide" id="PRO_0000033685">
    <location>
        <begin position="19"/>
        <end position="61"/>
    </location>
</feature>
<feature type="propeptide" id="PRO_0000033686" description="Inhibin alpha N-terminal region">
    <location>
        <begin position="62"/>
        <end position="232"/>
    </location>
</feature>
<feature type="chain" id="PRO_0000033687" description="Inhibin alpha chain">
    <location>
        <begin position="233"/>
        <end position="366"/>
    </location>
</feature>
<feature type="site" description="Cleavage">
    <location>
        <begin position="61"/>
        <end position="62"/>
    </location>
</feature>
<feature type="site" description="Cleavage">
    <location>
        <begin position="232"/>
        <end position="233"/>
    </location>
</feature>
<feature type="glycosylation site" description="N-linked (GlcNAc...) asparagine" evidence="4">
    <location>
        <position position="146"/>
    </location>
</feature>
<feature type="glycosylation site" description="N-linked (GlcNAc...) asparagine" evidence="9">
    <location>
        <position position="268"/>
    </location>
</feature>
<feature type="glycosylation site" description="N-linked (GlcNAc...) asparagine; partial" evidence="9">
    <location>
        <position position="302"/>
    </location>
</feature>
<feature type="disulfide bond" evidence="1">
    <location>
        <begin position="262"/>
        <end position="328"/>
    </location>
</feature>
<feature type="disulfide bond" evidence="1">
    <location>
        <begin position="291"/>
        <end position="363"/>
    </location>
</feature>
<feature type="disulfide bond" evidence="1">
    <location>
        <begin position="295"/>
        <end position="365"/>
    </location>
</feature>
<feature type="disulfide bond" description="Interchain" evidence="1">
    <location>
        <position position="327"/>
    </location>
</feature>
<feature type="sequence variant" id="VAR_072639" description="Found in a patient with early-onset epithelial ovarian tumor; uncertain significance; alters the ratio of secreted activins and ihibins." evidence="7">
    <original>R</original>
    <variation>L</variation>
    <location>
        <position position="60"/>
    </location>
</feature>
<feature type="sequence variant" id="VAR_034016" description="In dbSNP:rs12720061.">
    <original>G</original>
    <variation>R</variation>
    <location>
        <position position="227"/>
    </location>
</feature>
<feature type="sequence variant" id="VAR_015110" description="May play a role in premature ovarian failure; dbSNP:rs12720062." evidence="5">
    <original>A</original>
    <variation>T</variation>
    <location>
        <position position="257"/>
    </location>
</feature>
<feature type="mutagenesis site" description="Loss of cleavage; when associated with 60-AA-61." evidence="9">
    <original>RR</original>
    <variation>AA</variation>
    <location>
        <begin position="56"/>
        <end position="57"/>
    </location>
</feature>
<feature type="mutagenesis site" description="Loss of cleavage; when associated with 55-AA-56." evidence="9">
    <original>RR</original>
    <variation>AA</variation>
    <location>
        <begin position="60"/>
        <end position="61"/>
    </location>
</feature>
<feature type="mutagenesis site" description="Loss of cleavage." evidence="9">
    <original>RR</original>
    <variation>EA</variation>
    <location>
        <begin position="231"/>
        <end position="232"/>
    </location>
</feature>
<feature type="mutagenesis site" description="Loss of glycosylation." evidence="9">
    <original>N</original>
    <variation>Q</variation>
    <location>
        <position position="268"/>
    </location>
</feature>
<feature type="mutagenesis site" description="Loss of glycosylation." evidence="9">
    <original>N</original>
    <variation>Q</variation>
    <location>
        <position position="302"/>
    </location>
</feature>
<feature type="sequence conflict" description="In Ref. 7." evidence="11" ref="7">
    <original>H</original>
    <variation>V</variation>
    <location>
        <position position="17"/>
    </location>
</feature>
<feature type="sequence conflict" description="In Ref. 7." evidence="11" ref="7">
    <original>C</original>
    <variation>S</variation>
    <location>
        <position position="19"/>
    </location>
</feature>
<dbReference type="EMBL" id="M13981">
    <property type="protein sequence ID" value="AAA59166.1"/>
    <property type="molecule type" value="mRNA"/>
</dbReference>
<dbReference type="EMBL" id="X04445">
    <property type="protein sequence ID" value="CAA28040.1"/>
    <property type="molecule type" value="Genomic_DNA"/>
</dbReference>
<dbReference type="EMBL" id="X04446">
    <property type="protein sequence ID" value="CAA28040.1"/>
    <property type="status" value="JOINED"/>
    <property type="molecule type" value="Genomic_DNA"/>
</dbReference>
<dbReference type="EMBL" id="BT006954">
    <property type="protein sequence ID" value="AAP35600.1"/>
    <property type="molecule type" value="mRNA"/>
</dbReference>
<dbReference type="EMBL" id="AK292340">
    <property type="protein sequence ID" value="BAF85029.1"/>
    <property type="molecule type" value="mRNA"/>
</dbReference>
<dbReference type="EMBL" id="CH471063">
    <property type="protein sequence ID" value="EAW70774.1"/>
    <property type="molecule type" value="Genomic_DNA"/>
</dbReference>
<dbReference type="EMBL" id="BC006391">
    <property type="protein sequence ID" value="AAH06391.1"/>
    <property type="molecule type" value="mRNA"/>
</dbReference>
<dbReference type="EMBL" id="M13144">
    <property type="protein sequence ID" value="AAA59167.1"/>
    <property type="molecule type" value="mRNA"/>
</dbReference>
<dbReference type="CCDS" id="CCDS2444.1"/>
<dbReference type="PIR" id="A23556">
    <property type="entry name" value="A24248"/>
</dbReference>
<dbReference type="RefSeq" id="NP_002182.1">
    <property type="nucleotide sequence ID" value="NM_002191.4"/>
</dbReference>
<dbReference type="BioGRID" id="109835">
    <property type="interactions" value="52"/>
</dbReference>
<dbReference type="DIP" id="DIP-5826N"/>
<dbReference type="ELM" id="P05111"/>
<dbReference type="FunCoup" id="P05111">
    <property type="interactions" value="348"/>
</dbReference>
<dbReference type="IntAct" id="P05111">
    <property type="interactions" value="7"/>
</dbReference>
<dbReference type="STRING" id="9606.ENSP00000243786"/>
<dbReference type="BindingDB" id="P05111"/>
<dbReference type="ChEMBL" id="CHEMBL5169109"/>
<dbReference type="GlyCosmos" id="P05111">
    <property type="glycosylation" value="3 sites, No reported glycans"/>
</dbReference>
<dbReference type="GlyGen" id="P05111">
    <property type="glycosylation" value="4 sites"/>
</dbReference>
<dbReference type="iPTMnet" id="P05111"/>
<dbReference type="PhosphoSitePlus" id="P05111"/>
<dbReference type="BioMuta" id="INHA"/>
<dbReference type="DMDM" id="124274"/>
<dbReference type="MassIVE" id="P05111"/>
<dbReference type="PaxDb" id="9606-ENSP00000243786"/>
<dbReference type="PeptideAtlas" id="P05111"/>
<dbReference type="ProteomicsDB" id="51796"/>
<dbReference type="Antibodypedia" id="4368">
    <property type="antibodies" value="882 antibodies from 44 providers"/>
</dbReference>
<dbReference type="DNASU" id="3623"/>
<dbReference type="Ensembl" id="ENST00000243786.3">
    <property type="protein sequence ID" value="ENSP00000243786.2"/>
    <property type="gene ID" value="ENSG00000123999.5"/>
</dbReference>
<dbReference type="GeneID" id="3623"/>
<dbReference type="KEGG" id="hsa:3623"/>
<dbReference type="MANE-Select" id="ENST00000243786.3">
    <property type="protein sequence ID" value="ENSP00000243786.2"/>
    <property type="RefSeq nucleotide sequence ID" value="NM_002191.4"/>
    <property type="RefSeq protein sequence ID" value="NP_002182.1"/>
</dbReference>
<dbReference type="UCSC" id="uc002vmk.3">
    <property type="organism name" value="human"/>
</dbReference>
<dbReference type="AGR" id="HGNC:6065"/>
<dbReference type="CTD" id="3623"/>
<dbReference type="DisGeNET" id="3623"/>
<dbReference type="GeneCards" id="INHA"/>
<dbReference type="HGNC" id="HGNC:6065">
    <property type="gene designation" value="INHA"/>
</dbReference>
<dbReference type="HPA" id="ENSG00000123999">
    <property type="expression patterns" value="Group enriched (adrenal gland, ovary, testis)"/>
</dbReference>
<dbReference type="MalaCards" id="INHA"/>
<dbReference type="MIM" id="147380">
    <property type="type" value="gene"/>
</dbReference>
<dbReference type="neXtProt" id="NX_P05111"/>
<dbReference type="OpenTargets" id="ENSG00000123999"/>
<dbReference type="PharmGKB" id="PA29876"/>
<dbReference type="VEuPathDB" id="HostDB:ENSG00000123999"/>
<dbReference type="eggNOG" id="KOG3900">
    <property type="taxonomic scope" value="Eukaryota"/>
</dbReference>
<dbReference type="GeneTree" id="ENSGT00390000005935"/>
<dbReference type="HOGENOM" id="CLU_064515_0_0_1"/>
<dbReference type="InParanoid" id="P05111"/>
<dbReference type="OMA" id="TYVFRPS"/>
<dbReference type="OrthoDB" id="9929039at2759"/>
<dbReference type="PAN-GO" id="P05111">
    <property type="GO annotations" value="4 GO annotations based on evolutionary models"/>
</dbReference>
<dbReference type="PhylomeDB" id="P05111"/>
<dbReference type="TreeFam" id="TF331531"/>
<dbReference type="PathwayCommons" id="P05111"/>
<dbReference type="Reactome" id="R-HSA-1502540">
    <property type="pathway name" value="Signaling by Activin"/>
</dbReference>
<dbReference type="Reactome" id="R-HSA-201451">
    <property type="pathway name" value="Signaling by BMP"/>
</dbReference>
<dbReference type="Reactome" id="R-HSA-209822">
    <property type="pathway name" value="Glycoprotein hormones"/>
</dbReference>
<dbReference type="Reactome" id="R-HSA-9839406">
    <property type="pathway name" value="TGFBR3 regulates activin signaling"/>
</dbReference>
<dbReference type="SignaLink" id="P05111"/>
<dbReference type="SIGNOR" id="P05111"/>
<dbReference type="BioGRID-ORCS" id="3623">
    <property type="hits" value="12 hits in 1156 CRISPR screens"/>
</dbReference>
<dbReference type="GeneWiki" id="INHA"/>
<dbReference type="GenomeRNAi" id="3623"/>
<dbReference type="Pharos" id="P05111">
    <property type="development level" value="Tbio"/>
</dbReference>
<dbReference type="PRO" id="PR:P05111"/>
<dbReference type="Proteomes" id="UP000005640">
    <property type="component" value="Chromosome 2"/>
</dbReference>
<dbReference type="RNAct" id="P05111">
    <property type="molecule type" value="protein"/>
</dbReference>
<dbReference type="Bgee" id="ENSG00000123999">
    <property type="expression patterns" value="Expressed in adrenal tissue and 96 other cell types or tissues"/>
</dbReference>
<dbReference type="GO" id="GO:0005576">
    <property type="term" value="C:extracellular region"/>
    <property type="evidence" value="ECO:0000304"/>
    <property type="project" value="UniProtKB"/>
</dbReference>
<dbReference type="GO" id="GO:0005615">
    <property type="term" value="C:extracellular space"/>
    <property type="evidence" value="ECO:0000318"/>
    <property type="project" value="GO_Central"/>
</dbReference>
<dbReference type="GO" id="GO:0043512">
    <property type="term" value="C:inhibin A complex"/>
    <property type="evidence" value="ECO:0000314"/>
    <property type="project" value="HGNC-UCL"/>
</dbReference>
<dbReference type="GO" id="GO:0043513">
    <property type="term" value="C:inhibin B complex"/>
    <property type="evidence" value="ECO:0007669"/>
    <property type="project" value="Ensembl"/>
</dbReference>
<dbReference type="GO" id="GO:0034673">
    <property type="term" value="C:inhibin-betaglycan-ActRII complex"/>
    <property type="evidence" value="ECO:0000314"/>
    <property type="project" value="BHF-UCL"/>
</dbReference>
<dbReference type="GO" id="GO:0043025">
    <property type="term" value="C:neuronal cell body"/>
    <property type="evidence" value="ECO:0007669"/>
    <property type="project" value="Ensembl"/>
</dbReference>
<dbReference type="GO" id="GO:0001917">
    <property type="term" value="C:photoreceptor inner segment"/>
    <property type="evidence" value="ECO:0007669"/>
    <property type="project" value="Ensembl"/>
</dbReference>
<dbReference type="GO" id="GO:0001750">
    <property type="term" value="C:photoreceptor outer segment"/>
    <property type="evidence" value="ECO:0007669"/>
    <property type="project" value="Ensembl"/>
</dbReference>
<dbReference type="GO" id="GO:0005125">
    <property type="term" value="F:cytokine activity"/>
    <property type="evidence" value="ECO:0000318"/>
    <property type="project" value="GO_Central"/>
</dbReference>
<dbReference type="GO" id="GO:0008083">
    <property type="term" value="F:growth factor activity"/>
    <property type="evidence" value="ECO:0000304"/>
    <property type="project" value="UniProtKB"/>
</dbReference>
<dbReference type="GO" id="GO:0005179">
    <property type="term" value="F:hormone activity"/>
    <property type="evidence" value="ECO:0000304"/>
    <property type="project" value="UniProtKB"/>
</dbReference>
<dbReference type="GO" id="GO:0034711">
    <property type="term" value="F:inhibin binding"/>
    <property type="evidence" value="ECO:0007669"/>
    <property type="project" value="Ensembl"/>
</dbReference>
<dbReference type="GO" id="GO:0044877">
    <property type="term" value="F:protein-containing complex binding"/>
    <property type="evidence" value="ECO:0007669"/>
    <property type="project" value="Ensembl"/>
</dbReference>
<dbReference type="GO" id="GO:0005102">
    <property type="term" value="F:signaling receptor binding"/>
    <property type="evidence" value="ECO:0000353"/>
    <property type="project" value="HGNC-UCL"/>
</dbReference>
<dbReference type="GO" id="GO:0030154">
    <property type="term" value="P:cell differentiation"/>
    <property type="evidence" value="ECO:0000304"/>
    <property type="project" value="UniProtKB"/>
</dbReference>
<dbReference type="GO" id="GO:0007166">
    <property type="term" value="P:cell surface receptor signaling pathway"/>
    <property type="evidence" value="ECO:0000304"/>
    <property type="project" value="UniProtKB"/>
</dbReference>
<dbReference type="GO" id="GO:0007267">
    <property type="term" value="P:cell-cell signaling"/>
    <property type="evidence" value="ECO:0000304"/>
    <property type="project" value="UniProtKB"/>
</dbReference>
<dbReference type="GO" id="GO:0030218">
    <property type="term" value="P:erythrocyte differentiation"/>
    <property type="evidence" value="ECO:0000303"/>
    <property type="project" value="UniProtKB"/>
</dbReference>
<dbReference type="GO" id="GO:0042541">
    <property type="term" value="P:hemoglobin biosynthetic process"/>
    <property type="evidence" value="ECO:0000314"/>
    <property type="project" value="UniProtKB"/>
</dbReference>
<dbReference type="GO" id="GO:0008584">
    <property type="term" value="P:male gonad development"/>
    <property type="evidence" value="ECO:0007669"/>
    <property type="project" value="Ensembl"/>
</dbReference>
<dbReference type="GO" id="GO:0045578">
    <property type="term" value="P:negative regulation of B cell differentiation"/>
    <property type="evidence" value="ECO:0000304"/>
    <property type="project" value="UniProtKB"/>
</dbReference>
<dbReference type="GO" id="GO:0045786">
    <property type="term" value="P:negative regulation of cell cycle"/>
    <property type="evidence" value="ECO:0000304"/>
    <property type="project" value="UniProtKB"/>
</dbReference>
<dbReference type="GO" id="GO:0046882">
    <property type="term" value="P:negative regulation of follicle-stimulating hormone secretion"/>
    <property type="evidence" value="ECO:0000303"/>
    <property type="project" value="UniProtKB"/>
</dbReference>
<dbReference type="GO" id="GO:0045650">
    <property type="term" value="P:negative regulation of macrophage differentiation"/>
    <property type="evidence" value="ECO:0000304"/>
    <property type="project" value="UniProtKB"/>
</dbReference>
<dbReference type="GO" id="GO:0042326">
    <property type="term" value="P:negative regulation of phosphorylation"/>
    <property type="evidence" value="ECO:0000304"/>
    <property type="project" value="UniProtKB"/>
</dbReference>
<dbReference type="GO" id="GO:0032689">
    <property type="term" value="P:negative regulation of type II interferon production"/>
    <property type="evidence" value="ECO:0000304"/>
    <property type="project" value="UniProtKB"/>
</dbReference>
<dbReference type="GO" id="GO:0001541">
    <property type="term" value="P:ovarian follicle development"/>
    <property type="evidence" value="ECO:0000303"/>
    <property type="project" value="UniProtKB"/>
</dbReference>
<dbReference type="GO" id="GO:0046881">
    <property type="term" value="P:positive regulation of follicle-stimulating hormone secretion"/>
    <property type="evidence" value="ECO:0000304"/>
    <property type="project" value="UniProtKB"/>
</dbReference>
<dbReference type="GO" id="GO:0051726">
    <property type="term" value="P:regulation of cell cycle"/>
    <property type="evidence" value="ECO:0000314"/>
    <property type="project" value="HGNC-UCL"/>
</dbReference>
<dbReference type="GO" id="GO:0042127">
    <property type="term" value="P:regulation of cell population proliferation"/>
    <property type="evidence" value="ECO:0000314"/>
    <property type="project" value="HGNC-UCL"/>
</dbReference>
<dbReference type="GO" id="GO:0007165">
    <property type="term" value="P:signal transduction"/>
    <property type="evidence" value="ECO:0000304"/>
    <property type="project" value="ProtInc"/>
</dbReference>
<dbReference type="GO" id="GO:0001501">
    <property type="term" value="P:skeletal system development"/>
    <property type="evidence" value="ECO:0000304"/>
    <property type="project" value="ProtInc"/>
</dbReference>
<dbReference type="FunFam" id="2.10.90.10:FF:000024">
    <property type="entry name" value="Inhibin alpha chain"/>
    <property type="match status" value="1"/>
</dbReference>
<dbReference type="Gene3D" id="2.10.90.10">
    <property type="entry name" value="Cystine-knot cytokines"/>
    <property type="match status" value="1"/>
</dbReference>
<dbReference type="InterPro" id="IPR029034">
    <property type="entry name" value="Cystine-knot_cytokine"/>
</dbReference>
<dbReference type="InterPro" id="IPR017175">
    <property type="entry name" value="Inhibin_asu"/>
</dbReference>
<dbReference type="InterPro" id="IPR001839">
    <property type="entry name" value="TGF-b_C"/>
</dbReference>
<dbReference type="InterPro" id="IPR015615">
    <property type="entry name" value="TGF-beta-rel"/>
</dbReference>
<dbReference type="InterPro" id="IPR017948">
    <property type="entry name" value="TGFb_CS"/>
</dbReference>
<dbReference type="PANTHER" id="PTHR11848:SF117">
    <property type="entry name" value="INHIBIN ALPHA CHAIN"/>
    <property type="match status" value="1"/>
</dbReference>
<dbReference type="PANTHER" id="PTHR11848">
    <property type="entry name" value="TGF-BETA FAMILY"/>
    <property type="match status" value="1"/>
</dbReference>
<dbReference type="Pfam" id="PF00019">
    <property type="entry name" value="TGF_beta"/>
    <property type="match status" value="1"/>
</dbReference>
<dbReference type="PIRSF" id="PIRSF037328">
    <property type="entry name" value="Inhibin_alpha_subunit"/>
    <property type="match status" value="1"/>
</dbReference>
<dbReference type="PRINTS" id="PR00669">
    <property type="entry name" value="INHIBINA"/>
</dbReference>
<dbReference type="SMART" id="SM00204">
    <property type="entry name" value="TGFB"/>
    <property type="match status" value="1"/>
</dbReference>
<dbReference type="SUPFAM" id="SSF57501">
    <property type="entry name" value="Cystine-knot cytokines"/>
    <property type="match status" value="1"/>
</dbReference>
<dbReference type="PROSITE" id="PS00250">
    <property type="entry name" value="TGF_BETA_1"/>
    <property type="match status" value="1"/>
</dbReference>
<dbReference type="PROSITE" id="PS51362">
    <property type="entry name" value="TGF_BETA_2"/>
    <property type="match status" value="1"/>
</dbReference>
<keyword id="KW-0165">Cleavage on pair of basic residues</keyword>
<keyword id="KW-0903">Direct protein sequencing</keyword>
<keyword id="KW-1015">Disulfide bond</keyword>
<keyword id="KW-0325">Glycoprotein</keyword>
<keyword id="KW-0339">Growth factor</keyword>
<keyword id="KW-0372">Hormone</keyword>
<keyword id="KW-1267">Proteomics identification</keyword>
<keyword id="KW-1185">Reference proteome</keyword>
<keyword id="KW-0964">Secreted</keyword>
<keyword id="KW-0732">Signal</keyword>
<organism>
    <name type="scientific">Homo sapiens</name>
    <name type="common">Human</name>
    <dbReference type="NCBI Taxonomy" id="9606"/>
    <lineage>
        <taxon>Eukaryota</taxon>
        <taxon>Metazoa</taxon>
        <taxon>Chordata</taxon>
        <taxon>Craniata</taxon>
        <taxon>Vertebrata</taxon>
        <taxon>Euteleostomi</taxon>
        <taxon>Mammalia</taxon>
        <taxon>Eutheria</taxon>
        <taxon>Euarchontoglires</taxon>
        <taxon>Primates</taxon>
        <taxon>Haplorrhini</taxon>
        <taxon>Catarrhini</taxon>
        <taxon>Hominidae</taxon>
        <taxon>Homo</taxon>
    </lineage>
</organism>
<evidence type="ECO:0000250" key="1"/>
<evidence type="ECO:0000250" key="2">
    <source>
        <dbReference type="UniProtKB" id="P08476"/>
    </source>
</evidence>
<evidence type="ECO:0000250" key="3">
    <source>
        <dbReference type="UniProtKB" id="P17490"/>
    </source>
</evidence>
<evidence type="ECO:0000255" key="4"/>
<evidence type="ECO:0000269" key="5">
    <source>
    </source>
</evidence>
<evidence type="ECO:0000269" key="6">
    <source>
    </source>
</evidence>
<evidence type="ECO:0000269" key="7">
    <source>
    </source>
</evidence>
<evidence type="ECO:0000269" key="8">
    <source>
    </source>
</evidence>
<evidence type="ECO:0000269" key="9">
    <source>
    </source>
</evidence>
<evidence type="ECO:0000269" key="10">
    <source>
    </source>
</evidence>
<evidence type="ECO:0000305" key="11"/>